<protein>
    <recommendedName>
        <fullName>Extracellular metalloproteinase NpIII</fullName>
        <ecNumber>3.4.24.-</ecNumber>
    </recommendedName>
    <alternativeName>
        <fullName>Elastinolytic metalloproteinase NpIII</fullName>
    </alternativeName>
    <alternativeName>
        <fullName>Fungalysin NpIII</fullName>
    </alternativeName>
    <alternativeName>
        <fullName>Neutral protease III</fullName>
    </alternativeName>
</protein>
<evidence type="ECO:0000250" key="1"/>
<evidence type="ECO:0000255" key="2"/>
<evidence type="ECO:0000255" key="3">
    <source>
        <dbReference type="PROSITE-ProRule" id="PRU10095"/>
    </source>
</evidence>
<evidence type="ECO:0000305" key="4"/>
<accession>Q2U1N5</accession>
<accession>Q7Z8T2</accession>
<feature type="signal peptide" evidence="2">
    <location>
        <begin position="1"/>
        <end position="16"/>
    </location>
</feature>
<feature type="propeptide" id="PRO_0000407193" evidence="1">
    <location>
        <begin position="17"/>
        <end position="245"/>
    </location>
</feature>
<feature type="chain" id="PRO_0000407194" description="Extracellular metalloproteinase NpIII">
    <location>
        <begin position="246"/>
        <end position="639"/>
    </location>
</feature>
<feature type="active site" evidence="3">
    <location>
        <position position="430"/>
    </location>
</feature>
<feature type="binding site" evidence="3">
    <location>
        <position position="429"/>
    </location>
    <ligand>
        <name>Zn(2+)</name>
        <dbReference type="ChEBI" id="CHEBI:29105"/>
        <note>catalytic</note>
    </ligand>
</feature>
<feature type="binding site" evidence="3">
    <location>
        <position position="433"/>
    </location>
    <ligand>
        <name>Zn(2+)</name>
        <dbReference type="ChEBI" id="CHEBI:29105"/>
        <note>catalytic</note>
    </ligand>
</feature>
<feature type="glycosylation site" description="N-linked (GlcNAc...) asparagine" evidence="2">
    <location>
        <position position="287"/>
    </location>
</feature>
<feature type="glycosylation site" description="N-linked (GlcNAc...) asparagine" evidence="2">
    <location>
        <position position="320"/>
    </location>
</feature>
<feature type="glycosylation site" description="N-linked (GlcNAc...) asparagine" evidence="2">
    <location>
        <position position="336"/>
    </location>
</feature>
<feature type="glycosylation site" description="N-linked (GlcNAc...) asparagine" evidence="2">
    <location>
        <position position="368"/>
    </location>
</feature>
<feature type="glycosylation site" description="N-linked (GlcNAc...) asparagine" evidence="2">
    <location>
        <position position="509"/>
    </location>
</feature>
<feature type="sequence conflict" description="In Ref. 1; BAC78815." evidence="4" ref="1">
    <original>T</original>
    <variation>A</variation>
    <location>
        <position position="70"/>
    </location>
</feature>
<feature type="sequence conflict" description="In Ref. 1; BAC78815." evidence="4" ref="1">
    <original>L</original>
    <variation>V</variation>
    <location>
        <position position="109"/>
    </location>
</feature>
<organism>
    <name type="scientific">Aspergillus oryzae (strain ATCC 42149 / RIB 40)</name>
    <name type="common">Yellow koji mold</name>
    <dbReference type="NCBI Taxonomy" id="510516"/>
    <lineage>
        <taxon>Eukaryota</taxon>
        <taxon>Fungi</taxon>
        <taxon>Dikarya</taxon>
        <taxon>Ascomycota</taxon>
        <taxon>Pezizomycotina</taxon>
        <taxon>Eurotiomycetes</taxon>
        <taxon>Eurotiomycetidae</taxon>
        <taxon>Eurotiales</taxon>
        <taxon>Aspergillaceae</taxon>
        <taxon>Aspergillus</taxon>
        <taxon>Aspergillus subgen. Circumdati</taxon>
    </lineage>
</organism>
<comment type="function">
    <text evidence="1">Secreted metalloproteinase that allows assimilation of proteinaceous substrates.</text>
</comment>
<comment type="cofactor">
    <cofactor evidence="1">
        <name>Zn(2+)</name>
        <dbReference type="ChEBI" id="CHEBI:29105"/>
    </cofactor>
    <text evidence="1">Binds 1 zinc ion per subunit.</text>
</comment>
<comment type="subcellular location">
    <subcellularLocation>
        <location evidence="1">Secreted</location>
    </subcellularLocation>
</comment>
<comment type="induction">
    <text>Expression is controlled by the prtT transcription factor.</text>
</comment>
<comment type="similarity">
    <text evidence="4">Belongs to the peptidase M36 family.</text>
</comment>
<reference key="1">
    <citation type="submission" date="2000-04" db="EMBL/GenBank/DDBJ databases">
        <title>New neutral protease of Aspergillus oryzae.</title>
        <authorList>
            <person name="Tanaka A."/>
            <person name="Takagi H."/>
        </authorList>
    </citation>
    <scope>NUCLEOTIDE SEQUENCE [GENOMIC DNA]</scope>
    <source>
        <strain>JCM02238</strain>
    </source>
</reference>
<reference key="2">
    <citation type="journal article" date="2005" name="Nature">
        <title>Genome sequencing and analysis of Aspergillus oryzae.</title>
        <authorList>
            <person name="Machida M."/>
            <person name="Asai K."/>
            <person name="Sano M."/>
            <person name="Tanaka T."/>
            <person name="Kumagai T."/>
            <person name="Terai G."/>
            <person name="Kusumoto K."/>
            <person name="Arima T."/>
            <person name="Akita O."/>
            <person name="Kashiwagi Y."/>
            <person name="Abe K."/>
            <person name="Gomi K."/>
            <person name="Horiuchi H."/>
            <person name="Kitamoto K."/>
            <person name="Kobayashi T."/>
            <person name="Takeuchi M."/>
            <person name="Denning D.W."/>
            <person name="Galagan J.E."/>
            <person name="Nierman W.C."/>
            <person name="Yu J."/>
            <person name="Archer D.B."/>
            <person name="Bennett J.W."/>
            <person name="Bhatnagar D."/>
            <person name="Cleveland T.E."/>
            <person name="Fedorova N.D."/>
            <person name="Gotoh O."/>
            <person name="Horikawa H."/>
            <person name="Hosoyama A."/>
            <person name="Ichinomiya M."/>
            <person name="Igarashi R."/>
            <person name="Iwashita K."/>
            <person name="Juvvadi P.R."/>
            <person name="Kato M."/>
            <person name="Kato Y."/>
            <person name="Kin T."/>
            <person name="Kokubun A."/>
            <person name="Maeda H."/>
            <person name="Maeyama N."/>
            <person name="Maruyama J."/>
            <person name="Nagasaki H."/>
            <person name="Nakajima T."/>
            <person name="Oda K."/>
            <person name="Okada K."/>
            <person name="Paulsen I."/>
            <person name="Sakamoto K."/>
            <person name="Sawano T."/>
            <person name="Takahashi M."/>
            <person name="Takase K."/>
            <person name="Terabayashi Y."/>
            <person name="Wortman J.R."/>
            <person name="Yamada O."/>
            <person name="Yamagata Y."/>
            <person name="Anazawa H."/>
            <person name="Hata Y."/>
            <person name="Koide Y."/>
            <person name="Komori T."/>
            <person name="Koyama Y."/>
            <person name="Minetoki T."/>
            <person name="Suharnan S."/>
            <person name="Tanaka A."/>
            <person name="Isono K."/>
            <person name="Kuhara S."/>
            <person name="Ogasawara N."/>
            <person name="Kikuchi H."/>
        </authorList>
    </citation>
    <scope>NUCLEOTIDE SEQUENCE [LARGE SCALE GENOMIC DNA]</scope>
    <source>
        <strain>ATCC 42149 / RIB 40</strain>
    </source>
</reference>
<sequence length="639" mass="71153">MHMLLFIGALALPVFVCTQSCEPASLSPRLAGVDLEKFRLTPNAEYVDSDQQIPISTTNVGLIEQSYVETAIKLVRETFPNATFRLREDHYVGDNGVAHVHFRQTVHNLDVDNGDFNVNVGRDGSVFSYGNSFYTGPVPSITQLTKRDFTDPVAALKFALTHLQLPITAEDVSVESTKHPHKYVLRGTSGAVTNPKARLVYFVKPDGTLCLVWRVETDVDDNWLLTYVDAKTAEEIHGVVDYVSEATFQVYGWGINDPGQVDSRAVLTDPWDLKESPLTWFRDGQKNWTTTRGNNGIAQENINNLPTYLNNFRPDSPTQNFSYEYPAGGSPKDYINASITQLFYTANAYHDLLYTLGFNEKAGNFQWNNSGLGGKEKDYVILNAQDGASRNNADFATPPDGSPARMRMYLFTHTTPPRDGVFESGIVIHEYTHGLSMRLTGGPDNSRCLSAFESASMGEGWGDFMATAIRLKPSDTRATDYGMGMWVYNNEKGIRQYLYSTSMETNPLNYTSLNRMWEAHAGGTVWASMLYEVLWNLIDRHGKNDGPRPTFDERGVPKDGKYLAMKIVIDAMALQPCNPDFVQARNAILDADQALTGGQNKCEIWTGFAKRGLGQGAEYGRGRRVGSYDIPGDVCQKKI</sequence>
<keyword id="KW-0325">Glycoprotein</keyword>
<keyword id="KW-0378">Hydrolase</keyword>
<keyword id="KW-0479">Metal-binding</keyword>
<keyword id="KW-0482">Metalloprotease</keyword>
<keyword id="KW-0645">Protease</keyword>
<keyword id="KW-1185">Reference proteome</keyword>
<keyword id="KW-0964">Secreted</keyword>
<keyword id="KW-0732">Signal</keyword>
<keyword id="KW-0862">Zinc</keyword>
<keyword id="KW-0865">Zymogen</keyword>
<name>NPIII_ASPOR</name>
<proteinExistence type="evidence at transcript level"/>
<dbReference type="EC" id="3.4.24.-"/>
<dbReference type="EMBL" id="AB041338">
    <property type="protein sequence ID" value="BAC78815.1"/>
    <property type="molecule type" value="Genomic_DNA"/>
</dbReference>
<dbReference type="EMBL" id="BA000054">
    <property type="protein sequence ID" value="BAE64530.1"/>
    <property type="molecule type" value="Genomic_DNA"/>
</dbReference>
<dbReference type="RefSeq" id="XP_001825663.1">
    <property type="nucleotide sequence ID" value="XM_001825611.1"/>
</dbReference>
<dbReference type="SMR" id="Q2U1N5"/>
<dbReference type="STRING" id="510516.Q2U1N5"/>
<dbReference type="MEROPS" id="M36.001"/>
<dbReference type="GlyCosmos" id="Q2U1N5">
    <property type="glycosylation" value="5 sites, No reported glycans"/>
</dbReference>
<dbReference type="EnsemblFungi" id="BAE64530">
    <property type="protein sequence ID" value="BAE64530"/>
    <property type="gene ID" value="AO090138000160"/>
</dbReference>
<dbReference type="GeneID" id="5997764"/>
<dbReference type="KEGG" id="aor:AO090138000160"/>
<dbReference type="VEuPathDB" id="FungiDB:AO090138000160"/>
<dbReference type="HOGENOM" id="CLU_012703_3_0_1"/>
<dbReference type="OMA" id="CLVWRVE"/>
<dbReference type="OrthoDB" id="96955at5052"/>
<dbReference type="Proteomes" id="UP000006564">
    <property type="component" value="Chromosome 6"/>
</dbReference>
<dbReference type="GO" id="GO:0005576">
    <property type="term" value="C:extracellular region"/>
    <property type="evidence" value="ECO:0007669"/>
    <property type="project" value="UniProtKB-SubCell"/>
</dbReference>
<dbReference type="GO" id="GO:0004222">
    <property type="term" value="F:metalloendopeptidase activity"/>
    <property type="evidence" value="ECO:0007669"/>
    <property type="project" value="InterPro"/>
</dbReference>
<dbReference type="GO" id="GO:0008270">
    <property type="term" value="F:zinc ion binding"/>
    <property type="evidence" value="ECO:0007669"/>
    <property type="project" value="InterPro"/>
</dbReference>
<dbReference type="GO" id="GO:0006508">
    <property type="term" value="P:proteolysis"/>
    <property type="evidence" value="ECO:0007669"/>
    <property type="project" value="UniProtKB-KW"/>
</dbReference>
<dbReference type="CDD" id="cd09596">
    <property type="entry name" value="M36"/>
    <property type="match status" value="1"/>
</dbReference>
<dbReference type="Gene3D" id="3.10.170.10">
    <property type="match status" value="1"/>
</dbReference>
<dbReference type="Gene3D" id="1.10.390.10">
    <property type="entry name" value="Neutral Protease Domain 2"/>
    <property type="match status" value="1"/>
</dbReference>
<dbReference type="InterPro" id="IPR011096">
    <property type="entry name" value="FTP_domain"/>
</dbReference>
<dbReference type="InterPro" id="IPR050371">
    <property type="entry name" value="Fungal_virulence_M36"/>
</dbReference>
<dbReference type="InterPro" id="IPR001842">
    <property type="entry name" value="Peptidase_M36"/>
</dbReference>
<dbReference type="InterPro" id="IPR027268">
    <property type="entry name" value="Peptidase_M4/M1_CTD_sf"/>
</dbReference>
<dbReference type="PANTHER" id="PTHR33478">
    <property type="entry name" value="EXTRACELLULAR METALLOPROTEINASE MEP"/>
    <property type="match status" value="1"/>
</dbReference>
<dbReference type="PANTHER" id="PTHR33478:SF1">
    <property type="entry name" value="EXTRACELLULAR METALLOPROTEINASE MEP"/>
    <property type="match status" value="1"/>
</dbReference>
<dbReference type="Pfam" id="PF07504">
    <property type="entry name" value="FTP"/>
    <property type="match status" value="1"/>
</dbReference>
<dbReference type="Pfam" id="PF02128">
    <property type="entry name" value="Peptidase_M36"/>
    <property type="match status" value="1"/>
</dbReference>
<dbReference type="PRINTS" id="PR00999">
    <property type="entry name" value="FUNGALYSIN"/>
</dbReference>
<dbReference type="SUPFAM" id="SSF55486">
    <property type="entry name" value="Metalloproteases ('zincins'), catalytic domain"/>
    <property type="match status" value="1"/>
</dbReference>
<dbReference type="PROSITE" id="PS00142">
    <property type="entry name" value="ZINC_PROTEASE"/>
    <property type="match status" value="1"/>
</dbReference>
<gene>
    <name type="primary">NpIII</name>
    <name type="ORF">AO090138000160</name>
</gene>